<comment type="function">
    <text evidence="2 3">Exhibits a very robust glutathione (GSH)-dependent disulfide-bond reductase activity toward the model substrate, 2-hydroxyethyl disulfide; the actual physiological substrates are not known. Also has a low GSH-dependent hydroperoxidase activity toward cumene hydroperoxide, but does not reduce H(2)O(2), tert-butyl hydroperoxide, benzyl peroxide, or lauroyl peroxide. Exhibits little or no GSH transferase activity with most typical electrophilic substrates, and has no detectable transferase activity using glutathionylspermidine (GspSH) as the nucleophilic substrate. Is involved in defense against oxidative stress, probably via its peroxidase activity.</text>
</comment>
<comment type="biophysicochemical properties">
    <kinetics>
        <KM evidence="3">1.6 mM for glutathione (when assaying the disulfide-bond reductase activity with 2-hydroxyethyl disulfide)</KM>
        <text>kcat is 180 sec(-1) for the disulfide-bond reductase reaction toward 2-hydroxyethyl disulfide. kcat is 0.27 sec(-1) for the hydroperoxidase reaction with cumene hydroperoxide. kcat is 0.1 sec(-1) for the GSH transferase reaction with chloro-2,4-dinitrobenzene (CDNB) as substrate.</text>
    </kinetics>
</comment>
<comment type="subunit">
    <text evidence="5">Homodimer.</text>
</comment>
<comment type="disruption phenotype">
    <text evidence="2">Deletion of yfcG decreases the resistance of the bacteria to hydrogen peroxide.</text>
</comment>
<comment type="miscellaneous">
    <text evidence="5">The reductase activity of YfcG is unique in that no sulfhydryl groups in the protein appear to be covalently involved in the redox chemistry.</text>
</comment>
<comment type="miscellaneous">
    <text evidence="5">Glutathionylspermidine (GspSH) binds YfcG about 10 times more tightly than GSH. Moreover, GSSG binds 100 times more tightly than GSH and 10 times more tightly than the GSH analog, GSO(3-) (PubMed:19537707).</text>
</comment>
<comment type="similarity">
    <text evidence="4">Belongs to the GST superfamily. Nu-class GSH transferase family.</text>
</comment>
<reference key="1">
    <citation type="journal article" date="1997" name="DNA Res.">
        <title>Construction of a contiguous 874-kb sequence of the Escherichia coli-K12 genome corresponding to 50.0-68.8 min on the linkage map and analysis of its sequence features.</title>
        <authorList>
            <person name="Yamamoto Y."/>
            <person name="Aiba H."/>
            <person name="Baba T."/>
            <person name="Hayashi K."/>
            <person name="Inada T."/>
            <person name="Isono K."/>
            <person name="Itoh T."/>
            <person name="Kimura S."/>
            <person name="Kitagawa M."/>
            <person name="Makino K."/>
            <person name="Miki T."/>
            <person name="Mitsuhashi N."/>
            <person name="Mizobuchi K."/>
            <person name="Mori H."/>
            <person name="Nakade S."/>
            <person name="Nakamura Y."/>
            <person name="Nashimoto H."/>
            <person name="Oshima T."/>
            <person name="Oyama S."/>
            <person name="Saito N."/>
            <person name="Sampei G."/>
            <person name="Satoh Y."/>
            <person name="Sivasundaram S."/>
            <person name="Tagami H."/>
            <person name="Takahashi H."/>
            <person name="Takeda J."/>
            <person name="Takemoto K."/>
            <person name="Uehara K."/>
            <person name="Wada C."/>
            <person name="Yamagata S."/>
            <person name="Horiuchi T."/>
        </authorList>
    </citation>
    <scope>NUCLEOTIDE SEQUENCE [LARGE SCALE GENOMIC DNA]</scope>
    <source>
        <strain>K12 / W3110 / ATCC 27325 / DSM 5911</strain>
    </source>
</reference>
<reference key="2">
    <citation type="journal article" date="1997" name="Science">
        <title>The complete genome sequence of Escherichia coli K-12.</title>
        <authorList>
            <person name="Blattner F.R."/>
            <person name="Plunkett G. III"/>
            <person name="Bloch C.A."/>
            <person name="Perna N.T."/>
            <person name="Burland V."/>
            <person name="Riley M."/>
            <person name="Collado-Vides J."/>
            <person name="Glasner J.D."/>
            <person name="Rode C.K."/>
            <person name="Mayhew G.F."/>
            <person name="Gregor J."/>
            <person name="Davis N.W."/>
            <person name="Kirkpatrick H.A."/>
            <person name="Goeden M.A."/>
            <person name="Rose D.J."/>
            <person name="Mau B."/>
            <person name="Shao Y."/>
        </authorList>
    </citation>
    <scope>NUCLEOTIDE SEQUENCE [LARGE SCALE GENOMIC DNA]</scope>
    <source>
        <strain>K12 / MG1655 / ATCC 47076</strain>
    </source>
</reference>
<reference key="3">
    <citation type="journal article" date="2006" name="Mol. Syst. Biol.">
        <title>Highly accurate genome sequences of Escherichia coli K-12 strains MG1655 and W3110.</title>
        <authorList>
            <person name="Hayashi K."/>
            <person name="Morooka N."/>
            <person name="Yamamoto Y."/>
            <person name="Fujita K."/>
            <person name="Isono K."/>
            <person name="Choi S."/>
            <person name="Ohtsubo E."/>
            <person name="Baba T."/>
            <person name="Wanner B.L."/>
            <person name="Mori H."/>
            <person name="Horiuchi T."/>
        </authorList>
    </citation>
    <scope>NUCLEOTIDE SEQUENCE [LARGE SCALE GENOMIC DNA]</scope>
    <source>
        <strain>K12 / W3110 / ATCC 27325 / DSM 5911</strain>
    </source>
</reference>
<reference key="4">
    <citation type="journal article" date="2006" name="J. Biochem.">
        <title>Three distinct-type glutathione S-transferases from Escherichia coli important for defense against oxidative stress.</title>
        <authorList>
            <person name="Kanai T."/>
            <person name="Takahashi K."/>
            <person name="Inoue H."/>
        </authorList>
    </citation>
    <scope>FUNCTION IN DEFENSE AGAINST OXIDATIVE STRESS</scope>
    <scope>GSH TRANSFERASE ACTIVITY</scope>
    <scope>PEROXIDASE ACTIVITY</scope>
    <scope>DISRUPTION PHENOTYPE</scope>
    <scope>MUTAGENESIS OF THR-9; ASN-11 AND LYS-14</scope>
    <source>
        <strain>K12</strain>
    </source>
</reference>
<reference key="5">
    <citation type="journal article" date="2011" name="Biochemistry">
        <title>Structure and function of YghU, a nu-class glutathione transferase related to YfcG from Escherichia coli.</title>
        <authorList>
            <person name="Stourman N.V."/>
            <person name="Branch M.C."/>
            <person name="Schaab M.R."/>
            <person name="Harp J.M."/>
            <person name="Ladner J.E."/>
            <person name="Armstrong R.N."/>
        </authorList>
    </citation>
    <scope>FAMILY NAME</scope>
    <source>
        <strain>K12</strain>
    </source>
</reference>
<reference key="6">
    <citation type="journal article" date="2009" name="Biochemistry">
        <title>Analysis of the structure and function of YfcG from Escherichia coli reveals an efficient and unique disulfide bond reductase.</title>
        <authorList>
            <person name="Wadington M.C."/>
            <person name="Ladner J.E."/>
            <person name="Stourman N.V."/>
            <person name="Harp J.M."/>
            <person name="Armstrong R.N."/>
        </authorList>
    </citation>
    <scope>X-RAY CRYSTALLOGRAPHY (2.3 ANGSTROMS) IN COMPLEX WITH GLUTATHIONE DISULFIDE</scope>
    <scope>FUNCTION</scope>
    <scope>CATALYTIC ACTIVITY</scope>
    <scope>SUBSTRATE SPECIFICITY</scope>
    <scope>KINETIC PARAMETERS</scope>
    <scope>SUBUNIT</scope>
    <scope>MUTAGENESIS OF CYS-166</scope>
    <source>
        <strain>K12</strain>
    </source>
</reference>
<protein>
    <recommendedName>
        <fullName>Disulfide-bond oxidoreductase YfcG</fullName>
        <ecNumber>1.8.4.-</ecNumber>
    </recommendedName>
    <alternativeName>
        <fullName>GSH-dependent disulfide-bond oxidoreductase YfcG</fullName>
    </alternativeName>
    <alternativeName>
        <fullName>GST N1-1</fullName>
    </alternativeName>
    <alternativeName>
        <fullName>GST-like protein YfcG</fullName>
    </alternativeName>
    <alternativeName>
        <fullName>Organic hydroperoxidase</fullName>
        <ecNumber>1.11.1.-</ecNumber>
    </alternativeName>
</protein>
<dbReference type="EC" id="1.8.4.-"/>
<dbReference type="EC" id="1.11.1.-"/>
<dbReference type="EMBL" id="U00096">
    <property type="protein sequence ID" value="AAC75362.1"/>
    <property type="molecule type" value="Genomic_DNA"/>
</dbReference>
<dbReference type="EMBL" id="AP009048">
    <property type="protein sequence ID" value="BAA16139.1"/>
    <property type="molecule type" value="Genomic_DNA"/>
</dbReference>
<dbReference type="PIR" id="D65002">
    <property type="entry name" value="D65002"/>
</dbReference>
<dbReference type="RefSeq" id="NP_416805.1">
    <property type="nucleotide sequence ID" value="NC_000913.3"/>
</dbReference>
<dbReference type="RefSeq" id="WP_000566471.1">
    <property type="nucleotide sequence ID" value="NZ_STEB01000008.1"/>
</dbReference>
<dbReference type="PDB" id="3GX0">
    <property type="method" value="X-ray"/>
    <property type="resolution" value="2.30 A"/>
    <property type="chains" value="A=1-215"/>
</dbReference>
<dbReference type="PDB" id="5HFK">
    <property type="method" value="X-ray"/>
    <property type="resolution" value="1.55 A"/>
    <property type="chains" value="A/B=1-215"/>
</dbReference>
<dbReference type="PDBsum" id="3GX0"/>
<dbReference type="PDBsum" id="5HFK"/>
<dbReference type="SMR" id="P77526"/>
<dbReference type="BioGRID" id="4260517">
    <property type="interactions" value="15"/>
</dbReference>
<dbReference type="FunCoup" id="P77526">
    <property type="interactions" value="356"/>
</dbReference>
<dbReference type="IntAct" id="P77526">
    <property type="interactions" value="2"/>
</dbReference>
<dbReference type="STRING" id="511145.b2302"/>
<dbReference type="jPOST" id="P77526"/>
<dbReference type="PaxDb" id="511145-b2302"/>
<dbReference type="EnsemblBacteria" id="AAC75362">
    <property type="protein sequence ID" value="AAC75362"/>
    <property type="gene ID" value="b2302"/>
</dbReference>
<dbReference type="GeneID" id="93774872"/>
<dbReference type="GeneID" id="946763"/>
<dbReference type="KEGG" id="ecj:JW2299"/>
<dbReference type="KEGG" id="eco:b2302"/>
<dbReference type="KEGG" id="ecoc:C3026_12840"/>
<dbReference type="PATRIC" id="fig|1411691.4.peg.4432"/>
<dbReference type="EchoBASE" id="EB3863"/>
<dbReference type="eggNOG" id="COG0625">
    <property type="taxonomic scope" value="Bacteria"/>
</dbReference>
<dbReference type="HOGENOM" id="CLU_011226_14_4_6"/>
<dbReference type="InParanoid" id="P77526"/>
<dbReference type="OMA" id="KEPWFTK"/>
<dbReference type="OrthoDB" id="9803562at2"/>
<dbReference type="PhylomeDB" id="P77526"/>
<dbReference type="BioCyc" id="EcoCyc:G7194-MONOMER"/>
<dbReference type="BioCyc" id="MetaCyc:G7194-MONOMER"/>
<dbReference type="EvolutionaryTrace" id="P77526"/>
<dbReference type="PRO" id="PR:P77526"/>
<dbReference type="Proteomes" id="UP000000625">
    <property type="component" value="Chromosome"/>
</dbReference>
<dbReference type="GO" id="GO:0005737">
    <property type="term" value="C:cytoplasm"/>
    <property type="evidence" value="ECO:0000318"/>
    <property type="project" value="GO_Central"/>
</dbReference>
<dbReference type="GO" id="GO:0015036">
    <property type="term" value="F:disulfide oxidoreductase activity"/>
    <property type="evidence" value="ECO:0000314"/>
    <property type="project" value="EcoCyc"/>
</dbReference>
<dbReference type="GO" id="GO:0004364">
    <property type="term" value="F:glutathione transferase activity"/>
    <property type="evidence" value="ECO:0000318"/>
    <property type="project" value="GO_Central"/>
</dbReference>
<dbReference type="GO" id="GO:0004601">
    <property type="term" value="F:peroxidase activity"/>
    <property type="evidence" value="ECO:0007669"/>
    <property type="project" value="UniProtKB-KW"/>
</dbReference>
<dbReference type="GO" id="GO:0042803">
    <property type="term" value="F:protein homodimerization activity"/>
    <property type="evidence" value="ECO:0000314"/>
    <property type="project" value="EcoCyc"/>
</dbReference>
<dbReference type="GO" id="GO:0006979">
    <property type="term" value="P:response to oxidative stress"/>
    <property type="evidence" value="ECO:0000315"/>
    <property type="project" value="EcoCyc"/>
</dbReference>
<dbReference type="CDD" id="cd10291">
    <property type="entry name" value="GST_C_YfcG_like"/>
    <property type="match status" value="1"/>
</dbReference>
<dbReference type="CDD" id="cd03048">
    <property type="entry name" value="GST_N_Ure2p_like"/>
    <property type="match status" value="1"/>
</dbReference>
<dbReference type="FunFam" id="1.20.1050.10:FF:000014">
    <property type="entry name" value="GSH-dependent disulfide bond oxidoreductase"/>
    <property type="match status" value="1"/>
</dbReference>
<dbReference type="FunFam" id="3.40.30.10:FF:000046">
    <property type="entry name" value="GSH-dependent disulfide bond oxidoreductase"/>
    <property type="match status" value="1"/>
</dbReference>
<dbReference type="Gene3D" id="1.20.1050.10">
    <property type="match status" value="1"/>
</dbReference>
<dbReference type="Gene3D" id="3.40.30.10">
    <property type="entry name" value="Glutaredoxin"/>
    <property type="match status" value="1"/>
</dbReference>
<dbReference type="InterPro" id="IPR010987">
    <property type="entry name" value="Glutathione-S-Trfase_C-like"/>
</dbReference>
<dbReference type="InterPro" id="IPR036282">
    <property type="entry name" value="Glutathione-S-Trfase_C_sf"/>
</dbReference>
<dbReference type="InterPro" id="IPR004045">
    <property type="entry name" value="Glutathione_S-Trfase_N"/>
</dbReference>
<dbReference type="InterPro" id="IPR004046">
    <property type="entry name" value="GST_C"/>
</dbReference>
<dbReference type="InterPro" id="IPR036249">
    <property type="entry name" value="Thioredoxin-like_sf"/>
</dbReference>
<dbReference type="NCBIfam" id="NF010579">
    <property type="entry name" value="PRK13972.1"/>
    <property type="match status" value="1"/>
</dbReference>
<dbReference type="PANTHER" id="PTHR44051:SF19">
    <property type="entry name" value="DISULFIDE-BOND OXIDOREDUCTASE YFCG"/>
    <property type="match status" value="1"/>
</dbReference>
<dbReference type="PANTHER" id="PTHR44051">
    <property type="entry name" value="GLUTATHIONE S-TRANSFERASE-RELATED"/>
    <property type="match status" value="1"/>
</dbReference>
<dbReference type="Pfam" id="PF00043">
    <property type="entry name" value="GST_C"/>
    <property type="match status" value="1"/>
</dbReference>
<dbReference type="Pfam" id="PF02798">
    <property type="entry name" value="GST_N"/>
    <property type="match status" value="1"/>
</dbReference>
<dbReference type="SFLD" id="SFLDG01151">
    <property type="entry name" value="Main.2:_Nu-like"/>
    <property type="match status" value="1"/>
</dbReference>
<dbReference type="SFLD" id="SFLDG00358">
    <property type="entry name" value="Main_(cytGST)"/>
    <property type="match status" value="1"/>
</dbReference>
<dbReference type="SUPFAM" id="SSF47616">
    <property type="entry name" value="GST C-terminal domain-like"/>
    <property type="match status" value="1"/>
</dbReference>
<dbReference type="SUPFAM" id="SSF52833">
    <property type="entry name" value="Thioredoxin-like"/>
    <property type="match status" value="1"/>
</dbReference>
<dbReference type="PROSITE" id="PS50405">
    <property type="entry name" value="GST_CTER"/>
    <property type="match status" value="1"/>
</dbReference>
<dbReference type="PROSITE" id="PS50404">
    <property type="entry name" value="GST_NTER"/>
    <property type="match status" value="1"/>
</dbReference>
<feature type="chain" id="PRO_0000186016" description="Disulfide-bond oxidoreductase YfcG">
    <location>
        <begin position="1"/>
        <end position="215"/>
    </location>
</feature>
<feature type="domain" description="GST N-terminal">
    <location>
        <begin position="1"/>
        <end position="87"/>
    </location>
</feature>
<feature type="domain" description="GST C-terminal">
    <location>
        <begin position="90"/>
        <end position="215"/>
    </location>
</feature>
<feature type="binding site" evidence="3">
    <location>
        <position position="11"/>
    </location>
    <ligand>
        <name>glutathione</name>
        <dbReference type="ChEBI" id="CHEBI:57925"/>
        <label>1</label>
    </ligand>
</feature>
<feature type="binding site" evidence="3">
    <location>
        <position position="38"/>
    </location>
    <ligand>
        <name>glutathione</name>
        <dbReference type="ChEBI" id="CHEBI:57925"/>
        <label>1</label>
    </ligand>
</feature>
<feature type="binding site" evidence="1">
    <location>
        <position position="40"/>
    </location>
    <ligand>
        <name>glutathione</name>
        <dbReference type="ChEBI" id="CHEBI:57925"/>
    </ligand>
</feature>
<feature type="binding site" evidence="3">
    <location>
        <position position="52"/>
    </location>
    <ligand>
        <name>glutathione</name>
        <dbReference type="ChEBI" id="CHEBI:57925"/>
        <label>1</label>
    </ligand>
</feature>
<feature type="binding site" evidence="3">
    <location>
        <begin position="71"/>
        <end position="72"/>
    </location>
    <ligand>
        <name>glutathione</name>
        <dbReference type="ChEBI" id="CHEBI:57925"/>
        <label>1</label>
    </ligand>
</feature>
<feature type="binding site" evidence="3">
    <location>
        <position position="132"/>
    </location>
    <ligand>
        <name>glutathione</name>
        <dbReference type="ChEBI" id="CHEBI:57925"/>
        <label>2</label>
    </ligand>
</feature>
<feature type="mutagenesis site" description="No effect on GSH transferase activity." evidence="2">
    <original>T</original>
    <variation>A</variation>
    <location>
        <position position="9"/>
    </location>
</feature>
<feature type="mutagenesis site" description="Loss of GSH transferase activity." evidence="2">
    <original>N</original>
    <variation>A</variation>
    <location>
        <position position="11"/>
    </location>
</feature>
<feature type="mutagenesis site" description="10-fold reduction in GSH transferase activity." evidence="2">
    <original>K</original>
    <variation>A</variation>
    <location>
        <position position="14"/>
    </location>
</feature>
<feature type="mutagenesis site" description="No effect on disulfide-bond reductase activity." evidence="3">
    <original>C</original>
    <variation>A</variation>
    <location>
        <position position="166"/>
    </location>
</feature>
<feature type="strand" evidence="6">
    <location>
        <begin position="2"/>
        <end position="6"/>
    </location>
</feature>
<feature type="helix" evidence="6">
    <location>
        <begin position="10"/>
        <end position="22"/>
    </location>
</feature>
<feature type="strand" evidence="6">
    <location>
        <begin position="26"/>
        <end position="30"/>
    </location>
</feature>
<feature type="helix" evidence="6">
    <location>
        <begin position="33"/>
        <end position="35"/>
    </location>
</feature>
<feature type="helix" evidence="6">
    <location>
        <begin position="37"/>
        <end position="39"/>
    </location>
</feature>
<feature type="helix" evidence="6">
    <location>
        <begin position="41"/>
        <end position="44"/>
    </location>
</feature>
<feature type="strand" evidence="6">
    <location>
        <begin position="54"/>
        <end position="59"/>
    </location>
</feature>
<feature type="strand" evidence="6">
    <location>
        <begin position="67"/>
        <end position="71"/>
    </location>
</feature>
<feature type="helix" evidence="6">
    <location>
        <begin position="72"/>
        <end position="83"/>
    </location>
</feature>
<feature type="helix" evidence="6">
    <location>
        <begin position="91"/>
        <end position="106"/>
    </location>
</feature>
<feature type="helix" evidence="6">
    <location>
        <begin position="108"/>
        <end position="120"/>
    </location>
</feature>
<feature type="helix" evidence="6">
    <location>
        <begin position="127"/>
        <end position="148"/>
    </location>
</feature>
<feature type="strand" evidence="6">
    <location>
        <begin position="156"/>
        <end position="158"/>
    </location>
</feature>
<feature type="helix" evidence="6">
    <location>
        <begin position="161"/>
        <end position="170"/>
    </location>
</feature>
<feature type="helix" evidence="6">
    <location>
        <begin position="171"/>
        <end position="175"/>
    </location>
</feature>
<feature type="helix" evidence="6">
    <location>
        <begin position="180"/>
        <end position="182"/>
    </location>
</feature>
<feature type="helix" evidence="6">
    <location>
        <begin position="184"/>
        <end position="194"/>
    </location>
</feature>
<feature type="helix" evidence="6">
    <location>
        <begin position="197"/>
        <end position="205"/>
    </location>
</feature>
<accession>P77526</accession>
<gene>
    <name type="primary">yfcG</name>
    <name type="ordered locus">b2302</name>
    <name type="ordered locus">JW2299</name>
</gene>
<name>YFCG_ECOLI</name>
<keyword id="KW-0002">3D-structure</keyword>
<keyword id="KW-0560">Oxidoreductase</keyword>
<keyword id="KW-0575">Peroxidase</keyword>
<keyword id="KW-1185">Reference proteome</keyword>
<organism>
    <name type="scientific">Escherichia coli (strain K12)</name>
    <dbReference type="NCBI Taxonomy" id="83333"/>
    <lineage>
        <taxon>Bacteria</taxon>
        <taxon>Pseudomonadati</taxon>
        <taxon>Pseudomonadota</taxon>
        <taxon>Gammaproteobacteria</taxon>
        <taxon>Enterobacterales</taxon>
        <taxon>Enterobacteriaceae</taxon>
        <taxon>Escherichia</taxon>
    </lineage>
</organism>
<sequence length="215" mass="24516">MIDLYFAPTPNGHKITLFLEEAELDYRLIKVDLGKGGQFRPEFLRISPNNKIPAIVDHSPADGGEPLSLFESGAILLYLAEKTGLFLSHETRERAATLQWLFWQVGGLGPMLGQNHHFNHAAPQTIPYAIERYQVETQRLYHVLNKRLENSPWLGGENYSIADIACWPWVNAWTRQRIDLAMYPAVKNWHERIRSRPATGQALLKAQLGDERSDS</sequence>
<evidence type="ECO:0000250" key="1">
    <source>
        <dbReference type="UniProtKB" id="P08263"/>
    </source>
</evidence>
<evidence type="ECO:0000269" key="2">
    <source>
    </source>
</evidence>
<evidence type="ECO:0000269" key="3">
    <source>
    </source>
</evidence>
<evidence type="ECO:0000305" key="4"/>
<evidence type="ECO:0000305" key="5">
    <source>
    </source>
</evidence>
<evidence type="ECO:0007829" key="6">
    <source>
        <dbReference type="PDB" id="5HFK"/>
    </source>
</evidence>
<proteinExistence type="evidence at protein level"/>